<gene>
    <name evidence="1" type="primary">mgsA</name>
    <name type="ordered locus">SCH_1028</name>
</gene>
<keyword id="KW-0456">Lyase</keyword>
<feature type="chain" id="PRO_1000017827" description="Methylglyoxal synthase">
    <location>
        <begin position="1"/>
        <end position="152"/>
    </location>
</feature>
<feature type="domain" description="MGS-like" evidence="1">
    <location>
        <begin position="6"/>
        <end position="152"/>
    </location>
</feature>
<feature type="active site" description="Proton donor/acceptor" evidence="1">
    <location>
        <position position="71"/>
    </location>
</feature>
<feature type="binding site" evidence="1">
    <location>
        <position position="19"/>
    </location>
    <ligand>
        <name>substrate</name>
    </ligand>
</feature>
<feature type="binding site" evidence="1">
    <location>
        <position position="23"/>
    </location>
    <ligand>
        <name>substrate</name>
    </ligand>
</feature>
<feature type="binding site" evidence="1">
    <location>
        <begin position="45"/>
        <end position="48"/>
    </location>
    <ligand>
        <name>substrate</name>
    </ligand>
</feature>
<feature type="binding site" evidence="1">
    <location>
        <begin position="65"/>
        <end position="66"/>
    </location>
    <ligand>
        <name>substrate</name>
    </ligand>
</feature>
<feature type="binding site" evidence="1">
    <location>
        <position position="98"/>
    </location>
    <ligand>
        <name>substrate</name>
    </ligand>
</feature>
<accession>Q57QS7</accession>
<protein>
    <recommendedName>
        <fullName evidence="1">Methylglyoxal synthase</fullName>
        <shortName evidence="1">MGS</shortName>
        <ecNumber evidence="1">4.2.3.3</ecNumber>
    </recommendedName>
</protein>
<proteinExistence type="inferred from homology"/>
<sequence length="152" mass="16991">MELTTRTLPTRKHIALVAHDHCKQMLMNWVERHQPLLEKHVLYATGTTGNLIQRATGMDVNAMLSGPMGGDQQVGALISEGKIDVLIFFWDPLNAVPHDPDVKALLRLATVWNIPVATNVSTADFIIQSPHFNDAVDILIPDYARYLAERLK</sequence>
<name>MGSA_SALCH</name>
<organism>
    <name type="scientific">Salmonella choleraesuis (strain SC-B67)</name>
    <dbReference type="NCBI Taxonomy" id="321314"/>
    <lineage>
        <taxon>Bacteria</taxon>
        <taxon>Pseudomonadati</taxon>
        <taxon>Pseudomonadota</taxon>
        <taxon>Gammaproteobacteria</taxon>
        <taxon>Enterobacterales</taxon>
        <taxon>Enterobacteriaceae</taxon>
        <taxon>Salmonella</taxon>
    </lineage>
</organism>
<comment type="function">
    <text evidence="1">Catalyzes the formation of methylglyoxal from dihydroxyacetone phosphate.</text>
</comment>
<comment type="catalytic activity">
    <reaction evidence="1">
        <text>dihydroxyacetone phosphate = methylglyoxal + phosphate</text>
        <dbReference type="Rhea" id="RHEA:17937"/>
        <dbReference type="ChEBI" id="CHEBI:17158"/>
        <dbReference type="ChEBI" id="CHEBI:43474"/>
        <dbReference type="ChEBI" id="CHEBI:57642"/>
        <dbReference type="EC" id="4.2.3.3"/>
    </reaction>
</comment>
<comment type="similarity">
    <text evidence="1">Belongs to the methylglyoxal synthase family.</text>
</comment>
<dbReference type="EC" id="4.2.3.3" evidence="1"/>
<dbReference type="EMBL" id="AE017220">
    <property type="protein sequence ID" value="AAX64934.1"/>
    <property type="molecule type" value="Genomic_DNA"/>
</dbReference>
<dbReference type="RefSeq" id="WP_000424187.1">
    <property type="nucleotide sequence ID" value="NC_006905.1"/>
</dbReference>
<dbReference type="SMR" id="Q57QS7"/>
<dbReference type="KEGG" id="sec:SCH_1028"/>
<dbReference type="HOGENOM" id="CLU_120420_0_1_6"/>
<dbReference type="Proteomes" id="UP000000538">
    <property type="component" value="Chromosome"/>
</dbReference>
<dbReference type="GO" id="GO:0005829">
    <property type="term" value="C:cytosol"/>
    <property type="evidence" value="ECO:0007669"/>
    <property type="project" value="TreeGrafter"/>
</dbReference>
<dbReference type="GO" id="GO:0008929">
    <property type="term" value="F:methylglyoxal synthase activity"/>
    <property type="evidence" value="ECO:0007669"/>
    <property type="project" value="UniProtKB-UniRule"/>
</dbReference>
<dbReference type="GO" id="GO:0019242">
    <property type="term" value="P:methylglyoxal biosynthetic process"/>
    <property type="evidence" value="ECO:0007669"/>
    <property type="project" value="UniProtKB-UniRule"/>
</dbReference>
<dbReference type="CDD" id="cd01422">
    <property type="entry name" value="MGS"/>
    <property type="match status" value="1"/>
</dbReference>
<dbReference type="FunFam" id="3.40.50.1380:FF:000002">
    <property type="entry name" value="Methylglyoxal synthase"/>
    <property type="match status" value="1"/>
</dbReference>
<dbReference type="Gene3D" id="3.40.50.1380">
    <property type="entry name" value="Methylglyoxal synthase-like domain"/>
    <property type="match status" value="1"/>
</dbReference>
<dbReference type="HAMAP" id="MF_00549">
    <property type="entry name" value="Methylglyoxal_synth"/>
    <property type="match status" value="1"/>
</dbReference>
<dbReference type="InterPro" id="IPR004363">
    <property type="entry name" value="Methylgl_synth"/>
</dbReference>
<dbReference type="InterPro" id="IPR018148">
    <property type="entry name" value="Methylglyoxal_synth_AS"/>
</dbReference>
<dbReference type="InterPro" id="IPR011607">
    <property type="entry name" value="MGS-like_dom"/>
</dbReference>
<dbReference type="InterPro" id="IPR036914">
    <property type="entry name" value="MGS-like_dom_sf"/>
</dbReference>
<dbReference type="NCBIfam" id="TIGR00160">
    <property type="entry name" value="MGSA"/>
    <property type="match status" value="1"/>
</dbReference>
<dbReference type="NCBIfam" id="NF003559">
    <property type="entry name" value="PRK05234.1"/>
    <property type="match status" value="1"/>
</dbReference>
<dbReference type="PANTHER" id="PTHR30492">
    <property type="entry name" value="METHYLGLYOXAL SYNTHASE"/>
    <property type="match status" value="1"/>
</dbReference>
<dbReference type="PANTHER" id="PTHR30492:SF0">
    <property type="entry name" value="METHYLGLYOXAL SYNTHASE"/>
    <property type="match status" value="1"/>
</dbReference>
<dbReference type="Pfam" id="PF02142">
    <property type="entry name" value="MGS"/>
    <property type="match status" value="1"/>
</dbReference>
<dbReference type="PIRSF" id="PIRSF006614">
    <property type="entry name" value="Methylglyox_syn"/>
    <property type="match status" value="1"/>
</dbReference>
<dbReference type="SMART" id="SM00851">
    <property type="entry name" value="MGS"/>
    <property type="match status" value="1"/>
</dbReference>
<dbReference type="SUPFAM" id="SSF52335">
    <property type="entry name" value="Methylglyoxal synthase-like"/>
    <property type="match status" value="1"/>
</dbReference>
<dbReference type="PROSITE" id="PS01335">
    <property type="entry name" value="METHYLGLYOXAL_SYNTH"/>
    <property type="match status" value="1"/>
</dbReference>
<dbReference type="PROSITE" id="PS51855">
    <property type="entry name" value="MGS"/>
    <property type="match status" value="1"/>
</dbReference>
<evidence type="ECO:0000255" key="1">
    <source>
        <dbReference type="HAMAP-Rule" id="MF_00549"/>
    </source>
</evidence>
<reference key="1">
    <citation type="journal article" date="2005" name="Nucleic Acids Res.">
        <title>The genome sequence of Salmonella enterica serovar Choleraesuis, a highly invasive and resistant zoonotic pathogen.</title>
        <authorList>
            <person name="Chiu C.-H."/>
            <person name="Tang P."/>
            <person name="Chu C."/>
            <person name="Hu S."/>
            <person name="Bao Q."/>
            <person name="Yu J."/>
            <person name="Chou Y.-Y."/>
            <person name="Wang H.-S."/>
            <person name="Lee Y.-S."/>
        </authorList>
    </citation>
    <scope>NUCLEOTIDE SEQUENCE [LARGE SCALE GENOMIC DNA]</scope>
    <source>
        <strain>SC-B67</strain>
    </source>
</reference>